<proteinExistence type="evidence at transcript level"/>
<accession>C3KJE6</accession>
<dbReference type="EC" id="3.1.-.-" evidence="1"/>
<dbReference type="EMBL" id="BT083061">
    <property type="protein sequence ID" value="ACQ58768.1"/>
    <property type="molecule type" value="mRNA"/>
</dbReference>
<dbReference type="SMR" id="C3KJE6"/>
<dbReference type="GO" id="GO:0005739">
    <property type="term" value="C:mitochondrion"/>
    <property type="evidence" value="ECO:0007669"/>
    <property type="project" value="UniProtKB-SubCell"/>
</dbReference>
<dbReference type="GO" id="GO:0005730">
    <property type="term" value="C:nucleolus"/>
    <property type="evidence" value="ECO:0007669"/>
    <property type="project" value="UniProtKB-SubCell"/>
</dbReference>
<dbReference type="GO" id="GO:0005654">
    <property type="term" value="C:nucleoplasm"/>
    <property type="evidence" value="ECO:0007669"/>
    <property type="project" value="UniProtKB-SubCell"/>
</dbReference>
<dbReference type="GO" id="GO:0008409">
    <property type="term" value="F:5'-3' exonuclease activity"/>
    <property type="evidence" value="ECO:0007669"/>
    <property type="project" value="UniProtKB-UniRule"/>
</dbReference>
<dbReference type="GO" id="GO:0017108">
    <property type="term" value="F:5'-flap endonuclease activity"/>
    <property type="evidence" value="ECO:0007669"/>
    <property type="project" value="UniProtKB-UniRule"/>
</dbReference>
<dbReference type="GO" id="GO:0003677">
    <property type="term" value="F:DNA binding"/>
    <property type="evidence" value="ECO:0007669"/>
    <property type="project" value="UniProtKB-UniRule"/>
</dbReference>
<dbReference type="GO" id="GO:0000287">
    <property type="term" value="F:magnesium ion binding"/>
    <property type="evidence" value="ECO:0007669"/>
    <property type="project" value="UniProtKB-UniRule"/>
</dbReference>
<dbReference type="GO" id="GO:0030145">
    <property type="term" value="F:manganese ion binding"/>
    <property type="evidence" value="ECO:0007669"/>
    <property type="project" value="TreeGrafter"/>
</dbReference>
<dbReference type="GO" id="GO:0004523">
    <property type="term" value="F:RNA-DNA hybrid ribonuclease activity"/>
    <property type="evidence" value="ECO:0007669"/>
    <property type="project" value="TreeGrafter"/>
</dbReference>
<dbReference type="GO" id="GO:0006284">
    <property type="term" value="P:base-excision repair"/>
    <property type="evidence" value="ECO:0007669"/>
    <property type="project" value="UniProtKB-UniRule"/>
</dbReference>
<dbReference type="GO" id="GO:0043137">
    <property type="term" value="P:DNA replication, removal of RNA primer"/>
    <property type="evidence" value="ECO:0007669"/>
    <property type="project" value="UniProtKB-UniRule"/>
</dbReference>
<dbReference type="CDD" id="cd09867">
    <property type="entry name" value="PIN_FEN1"/>
    <property type="match status" value="1"/>
</dbReference>
<dbReference type="FunFam" id="1.10.150.20:FF:000009">
    <property type="entry name" value="Flap endonuclease 1"/>
    <property type="match status" value="1"/>
</dbReference>
<dbReference type="FunFam" id="3.40.50.1010:FF:000003">
    <property type="entry name" value="Flap endonuclease 1"/>
    <property type="match status" value="1"/>
</dbReference>
<dbReference type="Gene3D" id="1.10.150.20">
    <property type="entry name" value="5' to 3' exonuclease, C-terminal subdomain"/>
    <property type="match status" value="1"/>
</dbReference>
<dbReference type="Gene3D" id="3.40.50.1010">
    <property type="entry name" value="5'-nuclease"/>
    <property type="match status" value="1"/>
</dbReference>
<dbReference type="HAMAP" id="MF_00614">
    <property type="entry name" value="Fen"/>
    <property type="match status" value="1"/>
</dbReference>
<dbReference type="InterPro" id="IPR036279">
    <property type="entry name" value="5-3_exonuclease_C_sf"/>
</dbReference>
<dbReference type="InterPro" id="IPR023426">
    <property type="entry name" value="Flap_endonuc"/>
</dbReference>
<dbReference type="InterPro" id="IPR008918">
    <property type="entry name" value="HhH2"/>
</dbReference>
<dbReference type="InterPro" id="IPR029060">
    <property type="entry name" value="PIN-like_dom_sf"/>
</dbReference>
<dbReference type="InterPro" id="IPR006086">
    <property type="entry name" value="XPG-I_dom"/>
</dbReference>
<dbReference type="InterPro" id="IPR006084">
    <property type="entry name" value="XPG/Rad2"/>
</dbReference>
<dbReference type="InterPro" id="IPR019974">
    <property type="entry name" value="XPG_CS"/>
</dbReference>
<dbReference type="InterPro" id="IPR006085">
    <property type="entry name" value="XPG_DNA_repair_N"/>
</dbReference>
<dbReference type="PANTHER" id="PTHR11081:SF51">
    <property type="entry name" value="FLAP ENDONUCLEASE 1"/>
    <property type="match status" value="1"/>
</dbReference>
<dbReference type="PANTHER" id="PTHR11081">
    <property type="entry name" value="FLAP ENDONUCLEASE FAMILY MEMBER"/>
    <property type="match status" value="1"/>
</dbReference>
<dbReference type="Pfam" id="PF00867">
    <property type="entry name" value="XPG_I"/>
    <property type="match status" value="1"/>
</dbReference>
<dbReference type="Pfam" id="PF00752">
    <property type="entry name" value="XPG_N"/>
    <property type="match status" value="1"/>
</dbReference>
<dbReference type="PRINTS" id="PR00853">
    <property type="entry name" value="XPGRADSUPER"/>
</dbReference>
<dbReference type="SMART" id="SM00279">
    <property type="entry name" value="HhH2"/>
    <property type="match status" value="1"/>
</dbReference>
<dbReference type="SMART" id="SM00484">
    <property type="entry name" value="XPGI"/>
    <property type="match status" value="1"/>
</dbReference>
<dbReference type="SMART" id="SM00485">
    <property type="entry name" value="XPGN"/>
    <property type="match status" value="1"/>
</dbReference>
<dbReference type="SUPFAM" id="SSF47807">
    <property type="entry name" value="5' to 3' exonuclease, C-terminal subdomain"/>
    <property type="match status" value="1"/>
</dbReference>
<dbReference type="SUPFAM" id="SSF88723">
    <property type="entry name" value="PIN domain-like"/>
    <property type="match status" value="1"/>
</dbReference>
<dbReference type="PROSITE" id="PS00841">
    <property type="entry name" value="XPG_1"/>
    <property type="match status" value="1"/>
</dbReference>
<keyword id="KW-0227">DNA damage</keyword>
<keyword id="KW-0234">DNA repair</keyword>
<keyword id="KW-0235">DNA replication</keyword>
<keyword id="KW-0255">Endonuclease</keyword>
<keyword id="KW-0269">Exonuclease</keyword>
<keyword id="KW-0378">Hydrolase</keyword>
<keyword id="KW-0460">Magnesium</keyword>
<keyword id="KW-0479">Metal-binding</keyword>
<keyword id="KW-0496">Mitochondrion</keyword>
<keyword id="KW-0540">Nuclease</keyword>
<keyword id="KW-0539">Nucleus</keyword>
<keyword id="KW-0597">Phosphoprotein</keyword>
<name>FEN1_ANOFI</name>
<evidence type="ECO:0000255" key="1">
    <source>
        <dbReference type="HAMAP-Rule" id="MF_03140"/>
    </source>
</evidence>
<evidence type="ECO:0000256" key="2">
    <source>
        <dbReference type="SAM" id="MobiDB-lite"/>
    </source>
</evidence>
<gene>
    <name type="primary">fen1</name>
</gene>
<feature type="chain" id="PRO_0000403487" description="Flap endonuclease 1">
    <location>
        <begin position="1"/>
        <end position="380"/>
    </location>
</feature>
<feature type="region of interest" description="N-domain">
    <location>
        <begin position="1"/>
        <end position="104"/>
    </location>
</feature>
<feature type="region of interest" description="I-domain">
    <location>
        <begin position="122"/>
        <end position="253"/>
    </location>
</feature>
<feature type="region of interest" description="Interaction with PCNA" evidence="1">
    <location>
        <begin position="336"/>
        <end position="344"/>
    </location>
</feature>
<feature type="region of interest" description="Disordered" evidence="2">
    <location>
        <begin position="351"/>
        <end position="380"/>
    </location>
</feature>
<feature type="binding site" evidence="1">
    <location>
        <position position="34"/>
    </location>
    <ligand>
        <name>Mg(2+)</name>
        <dbReference type="ChEBI" id="CHEBI:18420"/>
        <label>1</label>
    </ligand>
</feature>
<feature type="binding site" evidence="1">
    <location>
        <position position="47"/>
    </location>
    <ligand>
        <name>DNA</name>
        <dbReference type="ChEBI" id="CHEBI:16991"/>
    </ligand>
</feature>
<feature type="binding site" evidence="1">
    <location>
        <position position="70"/>
    </location>
    <ligand>
        <name>DNA</name>
        <dbReference type="ChEBI" id="CHEBI:16991"/>
    </ligand>
</feature>
<feature type="binding site" evidence="1">
    <location>
        <position position="86"/>
    </location>
    <ligand>
        <name>Mg(2+)</name>
        <dbReference type="ChEBI" id="CHEBI:18420"/>
        <label>1</label>
    </ligand>
</feature>
<feature type="binding site" evidence="1">
    <location>
        <position position="158"/>
    </location>
    <ligand>
        <name>DNA</name>
        <dbReference type="ChEBI" id="CHEBI:16991"/>
    </ligand>
</feature>
<feature type="binding site" evidence="1">
    <location>
        <position position="158"/>
    </location>
    <ligand>
        <name>Mg(2+)</name>
        <dbReference type="ChEBI" id="CHEBI:18420"/>
        <label>1</label>
    </ligand>
</feature>
<feature type="binding site" evidence="1">
    <location>
        <position position="160"/>
    </location>
    <ligand>
        <name>Mg(2+)</name>
        <dbReference type="ChEBI" id="CHEBI:18420"/>
        <label>1</label>
    </ligand>
</feature>
<feature type="binding site" evidence="1">
    <location>
        <position position="179"/>
    </location>
    <ligand>
        <name>Mg(2+)</name>
        <dbReference type="ChEBI" id="CHEBI:18420"/>
        <label>2</label>
    </ligand>
</feature>
<feature type="binding site" evidence="1">
    <location>
        <position position="181"/>
    </location>
    <ligand>
        <name>Mg(2+)</name>
        <dbReference type="ChEBI" id="CHEBI:18420"/>
        <label>2</label>
    </ligand>
</feature>
<feature type="binding site" evidence="1">
    <location>
        <position position="231"/>
    </location>
    <ligand>
        <name>DNA</name>
        <dbReference type="ChEBI" id="CHEBI:16991"/>
    </ligand>
</feature>
<feature type="binding site" evidence="1">
    <location>
        <position position="233"/>
    </location>
    <ligand>
        <name>DNA</name>
        <dbReference type="ChEBI" id="CHEBI:16991"/>
    </ligand>
</feature>
<feature type="binding site" evidence="1">
    <location>
        <position position="233"/>
    </location>
    <ligand>
        <name>Mg(2+)</name>
        <dbReference type="ChEBI" id="CHEBI:18420"/>
        <label>2</label>
    </ligand>
</feature>
<protein>
    <recommendedName>
        <fullName evidence="1">Flap endonuclease 1</fullName>
        <shortName evidence="1">FEN-1</shortName>
        <ecNumber evidence="1">3.1.-.-</ecNumber>
    </recommendedName>
    <alternativeName>
        <fullName evidence="1">Flap structure-specific endonuclease 1</fullName>
    </alternativeName>
</protein>
<reference key="1">
    <citation type="submission" date="2009-05" db="EMBL/GenBank/DDBJ databases">
        <title>Anoplopoma fimbria ESTs and full-length cDNAs.</title>
        <authorList>
            <person name="Messmer A."/>
            <person name="Rondeau E."/>
            <person name="Sanderson D."/>
            <person name="Cooper G.A."/>
            <person name="Leong J."/>
            <person name="Koop B.F."/>
        </authorList>
    </citation>
    <scope>NUCLEOTIDE SEQUENCE [LARGE SCALE MRNA]</scope>
    <source>
        <tissue>Brain</tissue>
    </source>
</reference>
<organism>
    <name type="scientific">Anoplopoma fimbria</name>
    <name type="common">Sablefish</name>
    <dbReference type="NCBI Taxonomy" id="229290"/>
    <lineage>
        <taxon>Eukaryota</taxon>
        <taxon>Metazoa</taxon>
        <taxon>Chordata</taxon>
        <taxon>Craniata</taxon>
        <taxon>Vertebrata</taxon>
        <taxon>Euteleostomi</taxon>
        <taxon>Actinopterygii</taxon>
        <taxon>Neopterygii</taxon>
        <taxon>Teleostei</taxon>
        <taxon>Neoteleostei</taxon>
        <taxon>Acanthomorphata</taxon>
        <taxon>Eupercaria</taxon>
        <taxon>Perciformes</taxon>
        <taxon>Cottioidei</taxon>
        <taxon>Anoplopomatales</taxon>
        <taxon>Anoplopomatidae</taxon>
        <taxon>Anoplopoma</taxon>
    </lineage>
</organism>
<comment type="function">
    <text evidence="1">Structure-specific nuclease with 5'-flap endonuclease and 5'-3' exonuclease activities involved in DNA replication and repair. During DNA replication, cleaves the 5'-overhanging flap structure that is generated by displacement synthesis when DNA polymerase encounters the 5'-end of a downstream Okazaki fragment. It enters the flap from the 5'-end and then tracks to cleave the flap base, leaving a nick for ligation. Also involved in the long patch base excision repair (LP-BER) pathway, by cleaving within the apurinic/apyrimidinic (AP) site-terminated flap. Acts as a genome stabilization factor that prevents flaps from equilibrating into structures that lead to duplications and deletions. Also possesses 5'-3' exonuclease activity on nicked or gapped double-stranded DNA, and exhibits RNase H activity. Also involved in replication and repair of rDNA and in repairing mitochondrial DNA.</text>
</comment>
<comment type="cofactor">
    <cofactor evidence="1">
        <name>Mg(2+)</name>
        <dbReference type="ChEBI" id="CHEBI:18420"/>
    </cofactor>
    <text evidence="1">Binds 2 magnesium ions per subunit. They probably participate in the reaction catalyzed by the enzyme. May bind an additional third magnesium ion after substrate binding.</text>
</comment>
<comment type="subunit">
    <text evidence="1">Interacts with PCNA. Three molecules of fen1 bind to one PCNA trimer with each molecule binding to one PCNA monomer. PCNA stimulates the nuclease activity without altering cleavage specificity.</text>
</comment>
<comment type="subcellular location">
    <subcellularLocation>
        <location evidence="1">Nucleus</location>
        <location evidence="1">Nucleolus</location>
    </subcellularLocation>
    <subcellularLocation>
        <location evidence="1">Nucleus</location>
        <location evidence="1">Nucleoplasm</location>
    </subcellularLocation>
    <subcellularLocation>
        <location evidence="1">Mitochondrion</location>
    </subcellularLocation>
    <text evidence="1">Resides mostly in the nucleoli and relocalizes to the nucleoplasm upon DNA damage.</text>
</comment>
<comment type="PTM">
    <text evidence="1">Phosphorylated. Phosphorylation upon DNA damage induces relocalization to the nuclear plasma.</text>
</comment>
<comment type="similarity">
    <text evidence="1">Belongs to the XPG/RAD2 endonuclease family. FEN1 subfamily.</text>
</comment>
<sequence>MGIHGLTKLIADQAPGAIKEQDIKNYFGRKIAIDASMCLYQFLIAVRQDGNVLQNEDGETTSHLMGMFYRTIRMLEHGIKPVYVFDGKPPQLKSAELEKRGEKRAEAEKMLAQAQELGEQENIDKFSKRLVKVTKQHNDECKKLLTLMGVPYIEAPCEAEATCAALVKAGKVFATATEDMDGLTFGTNVLLRHLTASEAKKLPIQELHYSRILQDIGLTNEQFIDLCIPLGCDYCGTIKGIGPKRAIDLIKQHGSIEEILENIDSSKHPAPEDWLYKEARGLFLKAEVVDCSTVDLKWSEPDEEGLIQFMCNEKQFSEDRMRNGCKKILKSRQGSTQGRLDSFFSITGSLSSKRKEPELKGSAKKKQKTGATPGKFKKGK</sequence>